<sequence>MDKQQSPPPRRRRRPMLSCWECRRRKIKCDRNDPCAHCIRHETQCVFTAHTGTVATDSDVSRTRPGPKSASRPGVSIASGSNSAVATRPSSDAGRGGSAIPTAPPPRGPSSLPSIAGPNHPFNILNPSQDVSAPSTQVLQPSSRGPSLSTNTSPSASSAVIHTLLERIKTLEDSYSSLSSRHGDSIESRVSSIGEPRDLRPAWEDTVARHANAARRPAGLAGNWQDIVRRKSTKLGRSHRMGDAPDFAAIIECYSVMMGLTSKDDFSHIPEIKDLLAEGGGLLVESKQIAQRLKLGQPSKPPHTLSVVPPSPKLGQYLVRPTRERADVMAKLYFESFESAYRILHAPTFWANYEKYWQAPEAASNAVYLQILLVVAIGSSIYDHGDCNAVLDNIEMSRPCIFAAENWLADPFEKDRLEIAGLQVYCLCNMARQIYNVGGDLIWTSMGPLLYRALQVGLHREPGRLPGVSMFQAEIRRRLWATILDMVVQASLDALMPPMMSLDEFDVEPPANINDEEMDEDTTIIVPHPRTTFTSTSAQLALLETLPLRFGIVQYLFGMQSEQSYPSVLSLSSRLASALSMCNSLGNLGPQSQDQSHDNNMGTTNTTMAFRSITPFQRNLLDYLVRRFMTPLHMFFATQSHSNPVFHYSLTVSLDAALALVSPATPTTTTISTPAHNNEETNHFDRLLSTAGGLFREGFRTALTTISLALLVHAKTQQVSGTLHRAPQHRESLKAAVRDLVALAERRVRNGDTNIRAYMFLNMVLAQVEAMEAGARAGDGAFEMALVSGAVKSLRFCRDVIKTRAETRAPVDWEEMDFDADGMASFLPGDMDADAFGLDWDWESLLTTMDMAEG</sequence>
<name>ASR3_SARSH</name>
<protein>
    <recommendedName>
        <fullName evidence="5">Transcription factor asR3</fullName>
    </recommendedName>
    <alternativeName>
        <fullName evidence="5">Xenovulene A biosynthesis cluster protein R3</fullName>
    </alternativeName>
</protein>
<feature type="chain" id="PRO_0000449189" description="Transcription factor asR3">
    <location>
        <begin position="1"/>
        <end position="854"/>
    </location>
</feature>
<feature type="DNA-binding region" description="Zn(2)-C6 fungal-type" evidence="1">
    <location>
        <begin position="19"/>
        <end position="45"/>
    </location>
</feature>
<feature type="region of interest" description="Disordered" evidence="2">
    <location>
        <begin position="56"/>
        <end position="156"/>
    </location>
</feature>
<feature type="compositionally biased region" description="Polar residues" evidence="2">
    <location>
        <begin position="78"/>
        <end position="90"/>
    </location>
</feature>
<feature type="compositionally biased region" description="Polar residues" evidence="2">
    <location>
        <begin position="125"/>
        <end position="145"/>
    </location>
</feature>
<feature type="compositionally biased region" description="Low complexity" evidence="2">
    <location>
        <begin position="146"/>
        <end position="156"/>
    </location>
</feature>
<proteinExistence type="evidence at protein level"/>
<keyword id="KW-0238">DNA-binding</keyword>
<keyword id="KW-0479">Metal-binding</keyword>
<keyword id="KW-0539">Nucleus</keyword>
<keyword id="KW-0804">Transcription</keyword>
<keyword id="KW-0805">Transcription regulation</keyword>
<keyword id="KW-0862">Zinc</keyword>
<dbReference type="EMBL" id="MG736817">
    <property type="protein sequence ID" value="AWM95792.1"/>
    <property type="molecule type" value="Genomic_DNA"/>
</dbReference>
<dbReference type="SMR" id="A0A2U8U2K7"/>
<dbReference type="GO" id="GO:0005634">
    <property type="term" value="C:nucleus"/>
    <property type="evidence" value="ECO:0007669"/>
    <property type="project" value="UniProtKB-SubCell"/>
</dbReference>
<dbReference type="GO" id="GO:0001228">
    <property type="term" value="F:DNA-binding transcription activator activity, RNA polymerase II-specific"/>
    <property type="evidence" value="ECO:0007669"/>
    <property type="project" value="TreeGrafter"/>
</dbReference>
<dbReference type="GO" id="GO:0000978">
    <property type="term" value="F:RNA polymerase II cis-regulatory region sequence-specific DNA binding"/>
    <property type="evidence" value="ECO:0007669"/>
    <property type="project" value="TreeGrafter"/>
</dbReference>
<dbReference type="GO" id="GO:0008270">
    <property type="term" value="F:zinc ion binding"/>
    <property type="evidence" value="ECO:0007669"/>
    <property type="project" value="InterPro"/>
</dbReference>
<dbReference type="GO" id="GO:0006351">
    <property type="term" value="P:DNA-templated transcription"/>
    <property type="evidence" value="ECO:0007669"/>
    <property type="project" value="InterPro"/>
</dbReference>
<dbReference type="CDD" id="cd12148">
    <property type="entry name" value="fungal_TF_MHR"/>
    <property type="match status" value="1"/>
</dbReference>
<dbReference type="CDD" id="cd00067">
    <property type="entry name" value="GAL4"/>
    <property type="match status" value="1"/>
</dbReference>
<dbReference type="Gene3D" id="4.10.240.10">
    <property type="entry name" value="Zn(2)-C6 fungal-type DNA-binding domain"/>
    <property type="match status" value="1"/>
</dbReference>
<dbReference type="InterPro" id="IPR051430">
    <property type="entry name" value="Fungal_TF_Env_Response"/>
</dbReference>
<dbReference type="InterPro" id="IPR007219">
    <property type="entry name" value="Transcription_factor_dom_fun"/>
</dbReference>
<dbReference type="InterPro" id="IPR036864">
    <property type="entry name" value="Zn2-C6_fun-type_DNA-bd_sf"/>
</dbReference>
<dbReference type="InterPro" id="IPR001138">
    <property type="entry name" value="Zn2Cys6_DnaBD"/>
</dbReference>
<dbReference type="PANTHER" id="PTHR31944">
    <property type="entry name" value="HEME-RESPONSIVE ZINC FINGER TRANSCRIPTION FACTOR HAP1"/>
    <property type="match status" value="1"/>
</dbReference>
<dbReference type="PANTHER" id="PTHR31944:SF131">
    <property type="entry name" value="HEME-RESPONSIVE ZINC FINGER TRANSCRIPTION FACTOR HAP1"/>
    <property type="match status" value="1"/>
</dbReference>
<dbReference type="Pfam" id="PF04082">
    <property type="entry name" value="Fungal_trans"/>
    <property type="match status" value="1"/>
</dbReference>
<dbReference type="Pfam" id="PF00172">
    <property type="entry name" value="Zn_clus"/>
    <property type="match status" value="1"/>
</dbReference>
<dbReference type="SMART" id="SM00066">
    <property type="entry name" value="GAL4"/>
    <property type="match status" value="1"/>
</dbReference>
<dbReference type="SUPFAM" id="SSF57701">
    <property type="entry name" value="Zn2/Cys6 DNA-binding domain"/>
    <property type="match status" value="1"/>
</dbReference>
<dbReference type="PROSITE" id="PS00463">
    <property type="entry name" value="ZN2_CY6_FUNGAL_1"/>
    <property type="match status" value="1"/>
</dbReference>
<dbReference type="PROSITE" id="PS50048">
    <property type="entry name" value="ZN2_CY6_FUNGAL_2"/>
    <property type="match status" value="1"/>
</dbReference>
<accession>A0A2U8U2K7</accession>
<reference key="1">
    <citation type="journal article" date="2018" name="Nat. Commun.">
        <title>Three previously unrecognised classes of biosynthetic enzymes revealed during the production of xenovulene A.</title>
        <authorList>
            <person name="Schor R."/>
            <person name="Schotte C."/>
            <person name="Wibberg D."/>
            <person name="Kalinowski J."/>
            <person name="Cox R.J."/>
        </authorList>
    </citation>
    <scope>NUCLEOTIDE SEQUENCE [GENOMIC DNA]</scope>
    <scope>INDUCTION</scope>
    <scope>FUNCTION</scope>
</reference>
<reference key="2">
    <citation type="journal article" date="1997" name="J. Pharmacol. Exp. Ther.">
        <title>Regulation of neuronal and recombinant GABA(A) receptor ion channels by xenovulene A, a natural product isolated from Acremonium strictum.</title>
        <authorList>
            <person name="Thomas P."/>
            <person name="Sundaram H."/>
            <person name="Krishek B.J."/>
            <person name="Chazot P."/>
            <person name="Xie X."/>
            <person name="Bevan P."/>
            <person name="Brocchini S.J."/>
            <person name="Latham C.J."/>
            <person name="Charlton P."/>
            <person name="Moore M."/>
            <person name="Lewis S.J."/>
            <person name="Thornton D.M."/>
            <person name="Stephenson F.A."/>
            <person name="Smart T.G."/>
        </authorList>
    </citation>
    <scope>BIOTECHNOLOGY</scope>
</reference>
<reference key="3">
    <citation type="journal article" date="2007" name="Chem. Commun. (Camb.)">
        <title>Characterisation of 3-methylorcinaldehyde synthase (MOS) in Acremonium strictum: first observation of a reductive release mechanism during polyketide biosynthesis.</title>
        <authorList>
            <person name="Bailey A.M."/>
            <person name="Cox R.J."/>
            <person name="Harley K."/>
            <person name="Lazarus C.M."/>
            <person name="Simpson T.J."/>
            <person name="Skellam E."/>
        </authorList>
    </citation>
    <scope>FUNCTION</scope>
</reference>
<reference key="4">
    <citation type="journal article" date="2010" name="Chem. Commun. (Camb.)">
        <title>Catalytic role of the C-terminal domains of a fungal non-reducing polyketide synthase.</title>
        <authorList>
            <person name="Fisch K.M."/>
            <person name="Skellam E."/>
            <person name="Ivison D."/>
            <person name="Cox R.J."/>
            <person name="Bailey A.M."/>
            <person name="Lazarus C.M."/>
            <person name="Simpson T.J."/>
        </authorList>
    </citation>
    <scope>FUNCTION</scope>
</reference>
<evidence type="ECO:0000255" key="1">
    <source>
        <dbReference type="PROSITE-ProRule" id="PRU00227"/>
    </source>
</evidence>
<evidence type="ECO:0000256" key="2">
    <source>
        <dbReference type="SAM" id="MobiDB-lite"/>
    </source>
</evidence>
<evidence type="ECO:0000269" key="3">
    <source>
    </source>
</evidence>
<evidence type="ECO:0000269" key="4">
    <source>
    </source>
</evidence>
<evidence type="ECO:0000303" key="5">
    <source>
    </source>
</evidence>
<gene>
    <name evidence="5" type="primary">asR3</name>
</gene>
<comment type="function">
    <text evidence="3">Transcription factor; part of the gene cluster that mediates the biosynthesis of xenovulene A, an unusual meroterpenoid that has potent inhibitory effects on the human gamma-aminobutyrate A (GABAA) benzodiazepine receptor.</text>
</comment>
<comment type="subcellular location">
    <subcellularLocation>
        <location evidence="1">Nucleus</location>
    </subcellularLocation>
</comment>
<comment type="induction">
    <text evidence="3">Expression is significantly up-regulated under xenovulene A producing condition.</text>
</comment>
<comment type="biotechnology">
    <text evidence="4">Xenovulene A is a natural product exhibiting little structural resemblance with classical benzodiazepines yet is able to displace high-affinity ligand binding to the benzodiazepine site of the gamma-aminobutyrate A (GABAA) receptor and could be potentially used as an anti-depressant with reduced addictive properties.</text>
</comment>
<organism>
    <name type="scientific">Sarocladium schorii</name>
    <name type="common">Acremonium strictum (strain IMI 501407)</name>
    <dbReference type="NCBI Taxonomy" id="2203296"/>
    <lineage>
        <taxon>Eukaryota</taxon>
        <taxon>Fungi</taxon>
        <taxon>Dikarya</taxon>
        <taxon>Ascomycota</taxon>
        <taxon>Pezizomycotina</taxon>
        <taxon>Sordariomycetes</taxon>
        <taxon>Hypocreomycetidae</taxon>
        <taxon>Hypocreales</taxon>
        <taxon>Sarocladiaceae</taxon>
        <taxon>Sarocladium</taxon>
    </lineage>
</organism>